<keyword id="KW-1003">Cell membrane</keyword>
<keyword id="KW-0966">Cell projection</keyword>
<keyword id="KW-0969">Cilium</keyword>
<keyword id="KW-0963">Cytoplasm</keyword>
<keyword id="KW-0206">Cytoskeleton</keyword>
<keyword id="KW-0449">Lipoprotein</keyword>
<keyword id="KW-0472">Membrane</keyword>
<keyword id="KW-0519">Myristate</keyword>
<keyword id="KW-0597">Phosphoprotein</keyword>
<keyword id="KW-1185">Reference proteome</keyword>
<name>CYS1_MOUSE</name>
<organism>
    <name type="scientific">Mus musculus</name>
    <name type="common">Mouse</name>
    <dbReference type="NCBI Taxonomy" id="10090"/>
    <lineage>
        <taxon>Eukaryota</taxon>
        <taxon>Metazoa</taxon>
        <taxon>Chordata</taxon>
        <taxon>Craniata</taxon>
        <taxon>Vertebrata</taxon>
        <taxon>Euteleostomi</taxon>
        <taxon>Mammalia</taxon>
        <taxon>Eutheria</taxon>
        <taxon>Euarchontoglires</taxon>
        <taxon>Glires</taxon>
        <taxon>Rodentia</taxon>
        <taxon>Myomorpha</taxon>
        <taxon>Muroidea</taxon>
        <taxon>Muridae</taxon>
        <taxon>Murinae</taxon>
        <taxon>Mus</taxon>
        <taxon>Mus</taxon>
    </lineage>
</organism>
<evidence type="ECO:0000250" key="1"/>
<evidence type="ECO:0000256" key="2">
    <source>
        <dbReference type="SAM" id="MobiDB-lite"/>
    </source>
</evidence>
<evidence type="ECO:0000269" key="3">
    <source>
    </source>
</evidence>
<evidence type="ECO:0000269" key="4">
    <source>
    </source>
</evidence>
<evidence type="ECO:0000305" key="5"/>
<evidence type="ECO:0007744" key="6">
    <source>
    </source>
</evidence>
<protein>
    <recommendedName>
        <fullName>Cystin-1</fullName>
    </recommendedName>
    <alternativeName>
        <fullName>Cilia-associated protein</fullName>
    </alternativeName>
</protein>
<proteinExistence type="evidence at protein level"/>
<dbReference type="EMBL" id="AF390547">
    <property type="protein sequence ID" value="AAM08225.1"/>
    <property type="molecule type" value="Genomic_DNA"/>
</dbReference>
<dbReference type="EMBL" id="AF390548">
    <property type="protein sequence ID" value="AAM08707.1"/>
    <property type="molecule type" value="mRNA"/>
</dbReference>
<dbReference type="EMBL" id="BC139298">
    <property type="protein sequence ID" value="AAI39299.1"/>
    <property type="molecule type" value="mRNA"/>
</dbReference>
<dbReference type="EMBL" id="BC139302">
    <property type="protein sequence ID" value="AAI39303.1"/>
    <property type="molecule type" value="mRNA"/>
</dbReference>
<dbReference type="EMBL" id="BC145598">
    <property type="protein sequence ID" value="AAI45599.1"/>
    <property type="molecule type" value="mRNA"/>
</dbReference>
<dbReference type="EMBL" id="BC171971">
    <property type="protein sequence ID" value="AAI71971.1"/>
    <property type="molecule type" value="mRNA"/>
</dbReference>
<dbReference type="CCDS" id="CCDS36422.1"/>
<dbReference type="RefSeq" id="NP_001004455.2">
    <property type="nucleotide sequence ID" value="NM_001004455.2"/>
</dbReference>
<dbReference type="RefSeq" id="NP_001155279.1">
    <property type="nucleotide sequence ID" value="NM_001161807.1"/>
</dbReference>
<dbReference type="RefSeq" id="NP_619627.3">
    <property type="nucleotide sequence ID" value="NM_138686.3"/>
</dbReference>
<dbReference type="RefSeq" id="XP_006515014.1">
    <property type="nucleotide sequence ID" value="XM_006514951.3"/>
</dbReference>
<dbReference type="RefSeq" id="XP_006515015.1">
    <property type="nucleotide sequence ID" value="XM_006514952.3"/>
</dbReference>
<dbReference type="SMR" id="Q8R4T1"/>
<dbReference type="BioGRID" id="198858">
    <property type="interactions" value="1"/>
</dbReference>
<dbReference type="STRING" id="10090.ENSMUSP00000141121"/>
<dbReference type="GlyGen" id="Q8R4T1">
    <property type="glycosylation" value="1 site"/>
</dbReference>
<dbReference type="iPTMnet" id="Q8R4T1"/>
<dbReference type="PhosphoSitePlus" id="Q8R4T1"/>
<dbReference type="PaxDb" id="10090-ENSMUSP00000141121"/>
<dbReference type="ProteomicsDB" id="279138"/>
<dbReference type="DNASU" id="12879"/>
<dbReference type="GeneID" id="12879"/>
<dbReference type="KEGG" id="mmu:12879"/>
<dbReference type="UCSC" id="uc007nep.1">
    <property type="organism name" value="mouse"/>
</dbReference>
<dbReference type="AGR" id="MGI:2177632"/>
<dbReference type="CTD" id="192668"/>
<dbReference type="MGI" id="MGI:2177632">
    <property type="gene designation" value="Cys1"/>
</dbReference>
<dbReference type="eggNOG" id="ENOG502T1UF">
    <property type="taxonomic scope" value="Eukaryota"/>
</dbReference>
<dbReference type="InParanoid" id="Q8R4T1"/>
<dbReference type="OrthoDB" id="9450735at2759"/>
<dbReference type="PhylomeDB" id="Q8R4T1"/>
<dbReference type="BioGRID-ORCS" id="12879">
    <property type="hits" value="2 hits in 77 CRISPR screens"/>
</dbReference>
<dbReference type="ChiTaRS" id="Cys1">
    <property type="organism name" value="mouse"/>
</dbReference>
<dbReference type="PRO" id="PR:Q8R4T1"/>
<dbReference type="Proteomes" id="UP000000589">
    <property type="component" value="Unplaced"/>
</dbReference>
<dbReference type="RNAct" id="Q8R4T1">
    <property type="molecule type" value="protein"/>
</dbReference>
<dbReference type="GO" id="GO:0005930">
    <property type="term" value="C:axoneme"/>
    <property type="evidence" value="ECO:0000314"/>
    <property type="project" value="MGI"/>
</dbReference>
<dbReference type="GO" id="GO:0036064">
    <property type="term" value="C:ciliary basal body"/>
    <property type="evidence" value="ECO:0000314"/>
    <property type="project" value="MGI"/>
</dbReference>
<dbReference type="GO" id="GO:0060170">
    <property type="term" value="C:ciliary membrane"/>
    <property type="evidence" value="ECO:0007669"/>
    <property type="project" value="UniProtKB-SubCell"/>
</dbReference>
<dbReference type="GO" id="GO:0005829">
    <property type="term" value="C:cytosol"/>
    <property type="evidence" value="ECO:0000314"/>
    <property type="project" value="MGI"/>
</dbReference>
<dbReference type="GO" id="GO:0016020">
    <property type="term" value="C:membrane"/>
    <property type="evidence" value="ECO:0000314"/>
    <property type="project" value="MGI"/>
</dbReference>
<dbReference type="GO" id="GO:0045121">
    <property type="term" value="C:membrane raft"/>
    <property type="evidence" value="ECO:0000314"/>
    <property type="project" value="MGI"/>
</dbReference>
<dbReference type="GO" id="GO:0005634">
    <property type="term" value="C:nucleus"/>
    <property type="evidence" value="ECO:0000314"/>
    <property type="project" value="MGI"/>
</dbReference>
<dbReference type="GO" id="GO:0003682">
    <property type="term" value="F:chromatin binding"/>
    <property type="evidence" value="ECO:0000314"/>
    <property type="project" value="MGI"/>
</dbReference>
<dbReference type="GO" id="GO:0003714">
    <property type="term" value="F:transcription corepressor activity"/>
    <property type="evidence" value="ECO:0000314"/>
    <property type="project" value="MGI"/>
</dbReference>
<dbReference type="GO" id="GO:0048839">
    <property type="term" value="P:inner ear development"/>
    <property type="evidence" value="ECO:0000315"/>
    <property type="project" value="MGI"/>
</dbReference>
<dbReference type="GO" id="GO:0001822">
    <property type="term" value="P:kidney development"/>
    <property type="evidence" value="ECO:0000315"/>
    <property type="project" value="MGI"/>
</dbReference>
<dbReference type="GO" id="GO:0045944">
    <property type="term" value="P:positive regulation of transcription by RNA polymerase II"/>
    <property type="evidence" value="ECO:0000314"/>
    <property type="project" value="MGI"/>
</dbReference>
<accession>Q8R4T1</accession>
<accession>B7ZP27</accession>
<accession>Q8R4T0</accession>
<gene>
    <name type="primary">Cys1</name>
</gene>
<feature type="initiator methionine" description="Removed">
    <location>
        <position position="1"/>
    </location>
</feature>
<feature type="chain" id="PRO_0000261178" description="Cystin-1">
    <location>
        <begin position="2"/>
        <end position="145"/>
    </location>
</feature>
<feature type="region of interest" description="Disordered" evidence="2">
    <location>
        <begin position="1"/>
        <end position="129"/>
    </location>
</feature>
<feature type="short sequence motif" description="Ciliary targeting motif">
    <location>
        <begin position="29"/>
        <end position="33"/>
    </location>
</feature>
<feature type="modified residue" description="Phosphoserine" evidence="6">
    <location>
        <position position="116"/>
    </location>
</feature>
<feature type="lipid moiety-binding region" description="N-myristoyl glycine" evidence="4">
    <location>
        <position position="2"/>
    </location>
</feature>
<feature type="sequence conflict" description="In Ref. 1; AAM08707." evidence="5" ref="1">
    <original>P</original>
    <variation>R</variation>
    <location>
        <position position="39"/>
    </location>
</feature>
<reference key="1">
    <citation type="journal article" date="2002" name="J. Clin. Invest.">
        <title>Cystin, a novel cilia-associated protein, is disrupted in the cpk mouse model of polycystic kidney disease.</title>
        <authorList>
            <person name="Hou X."/>
            <person name="Mrug M."/>
            <person name="Yoder B.K."/>
            <person name="Lefkowitz E.J."/>
            <person name="Kremmidiotis G."/>
            <person name="D'Eustachio P."/>
            <person name="Beier D.R."/>
            <person name="Guay-Woodford L.M."/>
        </authorList>
    </citation>
    <scope>NUCLEOTIDE SEQUENCE [GENOMIC DNA / MRNA]</scope>
    <scope>FUNCTION</scope>
    <scope>SUBCELLULAR LOCATION</scope>
    <scope>DISEASE</scope>
    <scope>TISSUE SPECIFICITY</scope>
    <source>
        <strain>129/SvJ</strain>
        <strain>C57BL/6J</strain>
    </source>
</reference>
<reference key="2">
    <citation type="journal article" date="2004" name="Genome Res.">
        <title>The status, quality, and expansion of the NIH full-length cDNA project: the Mammalian Gene Collection (MGC).</title>
        <authorList>
            <consortium name="The MGC Project Team"/>
        </authorList>
    </citation>
    <scope>NUCLEOTIDE SEQUENCE [LARGE SCALE MRNA]</scope>
    <source>
        <tissue>Brain</tissue>
    </source>
</reference>
<reference key="3">
    <citation type="journal article" date="2009" name="J. Am. Soc. Nephrol.">
        <title>Cystin localizes to primary cilia via membrane microdomains and a targeting motif.</title>
        <authorList>
            <person name="Tao B."/>
            <person name="Bu S."/>
            <person name="Yang Z."/>
            <person name="Siroky B."/>
            <person name="Kappes J.C."/>
            <person name="Kispert A."/>
            <person name="Guay-Woodford L.M."/>
        </authorList>
    </citation>
    <scope>SUBCELLULAR LOCATION</scope>
    <scope>CILIARY TARGETING MOTIF</scope>
    <scope>MYRISTOYLATION AT GLY-2</scope>
</reference>
<reference key="4">
    <citation type="journal article" date="2010" name="Cell">
        <title>A tissue-specific atlas of mouse protein phosphorylation and expression.</title>
        <authorList>
            <person name="Huttlin E.L."/>
            <person name="Jedrychowski M.P."/>
            <person name="Elias J.E."/>
            <person name="Goswami T."/>
            <person name="Rad R."/>
            <person name="Beausoleil S.A."/>
            <person name="Villen J."/>
            <person name="Haas W."/>
            <person name="Sowa M.E."/>
            <person name="Gygi S.P."/>
        </authorList>
    </citation>
    <scope>PHOSPHORYLATION [LARGE SCALE ANALYSIS] AT SER-116</scope>
    <scope>IDENTIFICATION BY MASS SPECTROMETRY [LARGE SCALE ANALYSIS]</scope>
    <source>
        <tissue>Kidney</tissue>
        <tissue>Lung</tissue>
    </source>
</reference>
<sequence length="145" mass="15506">MGSGSSRSGRIPRRRRSPDRRQTGPGETASEGGTADQAPTAAGQEESGRDPRPATPSGGREETLRLLDQLLAESEAWGPQELTPRGPARLAPAVSPEKKVKGNPEDSCASEAPGNSPKRPEGQSAISYDYSEEELMASIEREYCR</sequence>
<comment type="subunit">
    <text evidence="1">Interacts (when myristoylated) with UNC119 and UNC119B; interaction is required for localization to cilium.</text>
</comment>
<comment type="subcellular location">
    <subcellularLocation>
        <location>Cell projection</location>
        <location>Cilium membrane</location>
        <topology>Lipid-anchor</topology>
    </subcellularLocation>
    <subcellularLocation>
        <location>Cytoplasm</location>
        <location>Cytoskeleton</location>
        <location>Cilium axoneme</location>
    </subcellularLocation>
    <text evidence="1">Localization to cilium is mediated via interaction with UNC119 and UNC119B, which bind to the myristoyl moiety of the N-terminus (By similarity). Expression is enriched in the ciliary axoneme.</text>
</comment>
<comment type="tissue specificity">
    <text evidence="3">Expressed primarily in the kidney and liver. Expressed at lower levels in the lung, brain and heart.</text>
</comment>
<comment type="developmental stage">
    <text>Expressed in the fetal kidney.</text>
</comment>
<comment type="disease">
    <text evidence="3">Defects in Cys1 are a cause of polycystic kidney disease.</text>
</comment>